<evidence type="ECO:0000255" key="1">
    <source>
        <dbReference type="HAMAP-Rule" id="MF_01302"/>
    </source>
</evidence>
<evidence type="ECO:0000305" key="2"/>
<organism>
    <name type="scientific">Metamycoplasma arthritidis (strain 158L3-1)</name>
    <name type="common">Mycoplasma arthritidis</name>
    <dbReference type="NCBI Taxonomy" id="243272"/>
    <lineage>
        <taxon>Bacteria</taxon>
        <taxon>Bacillati</taxon>
        <taxon>Mycoplasmatota</taxon>
        <taxon>Mycoplasmoidales</taxon>
        <taxon>Metamycoplasmataceae</taxon>
        <taxon>Metamycoplasma</taxon>
    </lineage>
</organism>
<comment type="function">
    <text evidence="1">One of the primary rRNA binding proteins, it binds directly to 16S rRNA central domain where it helps coordinate assembly of the platform of the 30S subunit.</text>
</comment>
<comment type="subunit">
    <text evidence="1">Part of the 30S ribosomal subunit. Contacts proteins S5 and S12.</text>
</comment>
<comment type="similarity">
    <text evidence="1">Belongs to the universal ribosomal protein uS8 family.</text>
</comment>
<name>RS8_META1</name>
<protein>
    <recommendedName>
        <fullName evidence="1">Small ribosomal subunit protein uS8</fullName>
    </recommendedName>
    <alternativeName>
        <fullName evidence="2">30S ribosomal protein S8</fullName>
    </alternativeName>
</protein>
<reference key="1">
    <citation type="journal article" date="2008" name="Infect. Immun.">
        <title>Genome of Mycoplasma arthritidis.</title>
        <authorList>
            <person name="Dybvig K."/>
            <person name="Zuhua C."/>
            <person name="Lao P."/>
            <person name="Jordan D.S."/>
            <person name="French C.T."/>
            <person name="Tu A.H."/>
            <person name="Loraine A.E."/>
        </authorList>
    </citation>
    <scope>NUCLEOTIDE SEQUENCE [LARGE SCALE GENOMIC DNA]</scope>
    <source>
        <strain>158L3-1</strain>
    </source>
</reference>
<proteinExistence type="inferred from homology"/>
<gene>
    <name evidence="1" type="primary">rpsH</name>
    <name type="ordered locus">MARTH_orf428</name>
</gene>
<feature type="chain" id="PRO_1000140581" description="Small ribosomal subunit protein uS8">
    <location>
        <begin position="1"/>
        <end position="137"/>
    </location>
</feature>
<accession>B3PMN3</accession>
<dbReference type="EMBL" id="CP001047">
    <property type="protein sequence ID" value="ACF07285.1"/>
    <property type="molecule type" value="Genomic_DNA"/>
</dbReference>
<dbReference type="RefSeq" id="WP_012498242.1">
    <property type="nucleotide sequence ID" value="NC_011025.1"/>
</dbReference>
<dbReference type="SMR" id="B3PMN3"/>
<dbReference type="STRING" id="243272.MARTH_orf428"/>
<dbReference type="KEGG" id="mat:MARTH_orf428"/>
<dbReference type="eggNOG" id="COG0096">
    <property type="taxonomic scope" value="Bacteria"/>
</dbReference>
<dbReference type="HOGENOM" id="CLU_098428_0_2_14"/>
<dbReference type="Proteomes" id="UP000008812">
    <property type="component" value="Chromosome"/>
</dbReference>
<dbReference type="GO" id="GO:1990904">
    <property type="term" value="C:ribonucleoprotein complex"/>
    <property type="evidence" value="ECO:0007669"/>
    <property type="project" value="UniProtKB-KW"/>
</dbReference>
<dbReference type="GO" id="GO:0005840">
    <property type="term" value="C:ribosome"/>
    <property type="evidence" value="ECO:0007669"/>
    <property type="project" value="UniProtKB-KW"/>
</dbReference>
<dbReference type="GO" id="GO:0019843">
    <property type="term" value="F:rRNA binding"/>
    <property type="evidence" value="ECO:0007669"/>
    <property type="project" value="UniProtKB-UniRule"/>
</dbReference>
<dbReference type="GO" id="GO:0003735">
    <property type="term" value="F:structural constituent of ribosome"/>
    <property type="evidence" value="ECO:0007669"/>
    <property type="project" value="InterPro"/>
</dbReference>
<dbReference type="GO" id="GO:0006412">
    <property type="term" value="P:translation"/>
    <property type="evidence" value="ECO:0007669"/>
    <property type="project" value="UniProtKB-UniRule"/>
</dbReference>
<dbReference type="FunFam" id="3.30.1490.10:FF:000001">
    <property type="entry name" value="30S ribosomal protein S8"/>
    <property type="match status" value="1"/>
</dbReference>
<dbReference type="Gene3D" id="3.30.1370.30">
    <property type="match status" value="1"/>
</dbReference>
<dbReference type="Gene3D" id="3.30.1490.10">
    <property type="match status" value="1"/>
</dbReference>
<dbReference type="HAMAP" id="MF_01302_B">
    <property type="entry name" value="Ribosomal_uS8_B"/>
    <property type="match status" value="1"/>
</dbReference>
<dbReference type="InterPro" id="IPR000630">
    <property type="entry name" value="Ribosomal_uS8"/>
</dbReference>
<dbReference type="InterPro" id="IPR047863">
    <property type="entry name" value="Ribosomal_uS8_CS"/>
</dbReference>
<dbReference type="InterPro" id="IPR035987">
    <property type="entry name" value="Ribosomal_uS8_sf"/>
</dbReference>
<dbReference type="NCBIfam" id="NF001109">
    <property type="entry name" value="PRK00136.1"/>
    <property type="match status" value="1"/>
</dbReference>
<dbReference type="PANTHER" id="PTHR11758">
    <property type="entry name" value="40S RIBOSOMAL PROTEIN S15A"/>
    <property type="match status" value="1"/>
</dbReference>
<dbReference type="Pfam" id="PF00410">
    <property type="entry name" value="Ribosomal_S8"/>
    <property type="match status" value="1"/>
</dbReference>
<dbReference type="SUPFAM" id="SSF56047">
    <property type="entry name" value="Ribosomal protein S8"/>
    <property type="match status" value="1"/>
</dbReference>
<dbReference type="PROSITE" id="PS00053">
    <property type="entry name" value="RIBOSOMAL_S8"/>
    <property type="match status" value="1"/>
</dbReference>
<sequence>MAIIIDPIADMFVRMKNAISRKYYEVTLPHSAKKVKILEIFKKEGYISDFEVLTNEKSTFKEIKITLKYKGMNQNQSAISGIKRVSKPGLKVYSSSEKLPRVLSGFGTAIISTSKGLLTDKEARKANVGGEVIAFIW</sequence>
<keyword id="KW-1185">Reference proteome</keyword>
<keyword id="KW-0687">Ribonucleoprotein</keyword>
<keyword id="KW-0689">Ribosomal protein</keyword>
<keyword id="KW-0694">RNA-binding</keyword>
<keyword id="KW-0699">rRNA-binding</keyword>